<dbReference type="EC" id="1.17.7.4" evidence="1"/>
<dbReference type="EMBL" id="CP001321">
    <property type="protein sequence ID" value="ACL32898.1"/>
    <property type="molecule type" value="Genomic_DNA"/>
</dbReference>
<dbReference type="RefSeq" id="WP_010786098.1">
    <property type="nucleotide sequence ID" value="NC_011852.1"/>
</dbReference>
<dbReference type="SMR" id="B8F6E6"/>
<dbReference type="STRING" id="557723.HAPS_1306"/>
<dbReference type="KEGG" id="hap:HAPS_1306"/>
<dbReference type="HOGENOM" id="CLU_027486_1_1_6"/>
<dbReference type="UniPathway" id="UPA00056">
    <property type="reaction ID" value="UER00097"/>
</dbReference>
<dbReference type="UniPathway" id="UPA00059">
    <property type="reaction ID" value="UER00105"/>
</dbReference>
<dbReference type="Proteomes" id="UP000006743">
    <property type="component" value="Chromosome"/>
</dbReference>
<dbReference type="GO" id="GO:0051539">
    <property type="term" value="F:4 iron, 4 sulfur cluster binding"/>
    <property type="evidence" value="ECO:0007669"/>
    <property type="project" value="UniProtKB-UniRule"/>
</dbReference>
<dbReference type="GO" id="GO:0051745">
    <property type="term" value="F:4-hydroxy-3-methylbut-2-enyl diphosphate reductase activity"/>
    <property type="evidence" value="ECO:0007669"/>
    <property type="project" value="UniProtKB-UniRule"/>
</dbReference>
<dbReference type="GO" id="GO:0046872">
    <property type="term" value="F:metal ion binding"/>
    <property type="evidence" value="ECO:0007669"/>
    <property type="project" value="UniProtKB-KW"/>
</dbReference>
<dbReference type="GO" id="GO:0050992">
    <property type="term" value="P:dimethylallyl diphosphate biosynthetic process"/>
    <property type="evidence" value="ECO:0007669"/>
    <property type="project" value="UniProtKB-UniRule"/>
</dbReference>
<dbReference type="GO" id="GO:0019288">
    <property type="term" value="P:isopentenyl diphosphate biosynthetic process, methylerythritol 4-phosphate pathway"/>
    <property type="evidence" value="ECO:0007669"/>
    <property type="project" value="UniProtKB-UniRule"/>
</dbReference>
<dbReference type="GO" id="GO:0016114">
    <property type="term" value="P:terpenoid biosynthetic process"/>
    <property type="evidence" value="ECO:0007669"/>
    <property type="project" value="UniProtKB-UniRule"/>
</dbReference>
<dbReference type="CDD" id="cd13944">
    <property type="entry name" value="lytB_ispH"/>
    <property type="match status" value="1"/>
</dbReference>
<dbReference type="Gene3D" id="3.40.50.11270">
    <property type="match status" value="1"/>
</dbReference>
<dbReference type="Gene3D" id="3.40.1010.20">
    <property type="entry name" value="4-hydroxy-3-methylbut-2-enyl diphosphate reductase, catalytic domain"/>
    <property type="match status" value="2"/>
</dbReference>
<dbReference type="HAMAP" id="MF_00191">
    <property type="entry name" value="IspH"/>
    <property type="match status" value="1"/>
</dbReference>
<dbReference type="InterPro" id="IPR003451">
    <property type="entry name" value="LytB/IspH"/>
</dbReference>
<dbReference type="NCBIfam" id="TIGR00216">
    <property type="entry name" value="ispH_lytB"/>
    <property type="match status" value="1"/>
</dbReference>
<dbReference type="NCBIfam" id="NF002188">
    <property type="entry name" value="PRK01045.1-2"/>
    <property type="match status" value="1"/>
</dbReference>
<dbReference type="NCBIfam" id="NF002190">
    <property type="entry name" value="PRK01045.1-4"/>
    <property type="match status" value="1"/>
</dbReference>
<dbReference type="PANTHER" id="PTHR30426">
    <property type="entry name" value="4-HYDROXY-3-METHYLBUT-2-ENYL DIPHOSPHATE REDUCTASE"/>
    <property type="match status" value="1"/>
</dbReference>
<dbReference type="PANTHER" id="PTHR30426:SF0">
    <property type="entry name" value="4-HYDROXY-3-METHYLBUT-2-ENYL DIPHOSPHATE REDUCTASE"/>
    <property type="match status" value="1"/>
</dbReference>
<dbReference type="Pfam" id="PF02401">
    <property type="entry name" value="LYTB"/>
    <property type="match status" value="1"/>
</dbReference>
<organism>
    <name type="scientific">Glaesserella parasuis serovar 5 (strain SH0165)</name>
    <name type="common">Haemophilus parasuis</name>
    <dbReference type="NCBI Taxonomy" id="557723"/>
    <lineage>
        <taxon>Bacteria</taxon>
        <taxon>Pseudomonadati</taxon>
        <taxon>Pseudomonadota</taxon>
        <taxon>Gammaproteobacteria</taxon>
        <taxon>Pasteurellales</taxon>
        <taxon>Pasteurellaceae</taxon>
        <taxon>Glaesserella</taxon>
    </lineage>
</organism>
<keyword id="KW-0004">4Fe-4S</keyword>
<keyword id="KW-0408">Iron</keyword>
<keyword id="KW-0411">Iron-sulfur</keyword>
<keyword id="KW-0414">Isoprene biosynthesis</keyword>
<keyword id="KW-0479">Metal-binding</keyword>
<keyword id="KW-0560">Oxidoreductase</keyword>
<keyword id="KW-1185">Reference proteome</keyword>
<proteinExistence type="inferred from homology"/>
<feature type="chain" id="PRO_1000124287" description="4-hydroxy-3-methylbut-2-enyl diphosphate reductase">
    <location>
        <begin position="1"/>
        <end position="314"/>
    </location>
</feature>
<feature type="active site" description="Proton donor" evidence="1">
    <location>
        <position position="126"/>
    </location>
</feature>
<feature type="binding site" evidence="1">
    <location>
        <position position="12"/>
    </location>
    <ligand>
        <name>[4Fe-4S] cluster</name>
        <dbReference type="ChEBI" id="CHEBI:49883"/>
    </ligand>
</feature>
<feature type="binding site" evidence="1">
    <location>
        <position position="41"/>
    </location>
    <ligand>
        <name>(2E)-4-hydroxy-3-methylbut-2-enyl diphosphate</name>
        <dbReference type="ChEBI" id="CHEBI:128753"/>
    </ligand>
</feature>
<feature type="binding site" evidence="1">
    <location>
        <position position="41"/>
    </location>
    <ligand>
        <name>dimethylallyl diphosphate</name>
        <dbReference type="ChEBI" id="CHEBI:57623"/>
    </ligand>
</feature>
<feature type="binding site" evidence="1">
    <location>
        <position position="41"/>
    </location>
    <ligand>
        <name>isopentenyl diphosphate</name>
        <dbReference type="ChEBI" id="CHEBI:128769"/>
    </ligand>
</feature>
<feature type="binding site" evidence="1">
    <location>
        <position position="74"/>
    </location>
    <ligand>
        <name>(2E)-4-hydroxy-3-methylbut-2-enyl diphosphate</name>
        <dbReference type="ChEBI" id="CHEBI:128753"/>
    </ligand>
</feature>
<feature type="binding site" evidence="1">
    <location>
        <position position="74"/>
    </location>
    <ligand>
        <name>dimethylallyl diphosphate</name>
        <dbReference type="ChEBI" id="CHEBI:57623"/>
    </ligand>
</feature>
<feature type="binding site" evidence="1">
    <location>
        <position position="74"/>
    </location>
    <ligand>
        <name>isopentenyl diphosphate</name>
        <dbReference type="ChEBI" id="CHEBI:128769"/>
    </ligand>
</feature>
<feature type="binding site" evidence="1">
    <location>
        <position position="96"/>
    </location>
    <ligand>
        <name>[4Fe-4S] cluster</name>
        <dbReference type="ChEBI" id="CHEBI:49883"/>
    </ligand>
</feature>
<feature type="binding site" evidence="1">
    <location>
        <position position="124"/>
    </location>
    <ligand>
        <name>(2E)-4-hydroxy-3-methylbut-2-enyl diphosphate</name>
        <dbReference type="ChEBI" id="CHEBI:128753"/>
    </ligand>
</feature>
<feature type="binding site" evidence="1">
    <location>
        <position position="124"/>
    </location>
    <ligand>
        <name>dimethylallyl diphosphate</name>
        <dbReference type="ChEBI" id="CHEBI:57623"/>
    </ligand>
</feature>
<feature type="binding site" evidence="1">
    <location>
        <position position="124"/>
    </location>
    <ligand>
        <name>isopentenyl diphosphate</name>
        <dbReference type="ChEBI" id="CHEBI:128769"/>
    </ligand>
</feature>
<feature type="binding site" evidence="1">
    <location>
        <position position="167"/>
    </location>
    <ligand>
        <name>(2E)-4-hydroxy-3-methylbut-2-enyl diphosphate</name>
        <dbReference type="ChEBI" id="CHEBI:128753"/>
    </ligand>
</feature>
<feature type="binding site" evidence="1">
    <location>
        <position position="197"/>
    </location>
    <ligand>
        <name>[4Fe-4S] cluster</name>
        <dbReference type="ChEBI" id="CHEBI:49883"/>
    </ligand>
</feature>
<feature type="binding site" evidence="1">
    <location>
        <position position="225"/>
    </location>
    <ligand>
        <name>(2E)-4-hydroxy-3-methylbut-2-enyl diphosphate</name>
        <dbReference type="ChEBI" id="CHEBI:128753"/>
    </ligand>
</feature>
<feature type="binding site" evidence="1">
    <location>
        <position position="225"/>
    </location>
    <ligand>
        <name>dimethylallyl diphosphate</name>
        <dbReference type="ChEBI" id="CHEBI:57623"/>
    </ligand>
</feature>
<feature type="binding site" evidence="1">
    <location>
        <position position="225"/>
    </location>
    <ligand>
        <name>isopentenyl diphosphate</name>
        <dbReference type="ChEBI" id="CHEBI:128769"/>
    </ligand>
</feature>
<feature type="binding site" evidence="1">
    <location>
        <position position="226"/>
    </location>
    <ligand>
        <name>(2E)-4-hydroxy-3-methylbut-2-enyl diphosphate</name>
        <dbReference type="ChEBI" id="CHEBI:128753"/>
    </ligand>
</feature>
<feature type="binding site" evidence="1">
    <location>
        <position position="226"/>
    </location>
    <ligand>
        <name>dimethylallyl diphosphate</name>
        <dbReference type="ChEBI" id="CHEBI:57623"/>
    </ligand>
</feature>
<feature type="binding site" evidence="1">
    <location>
        <position position="226"/>
    </location>
    <ligand>
        <name>isopentenyl diphosphate</name>
        <dbReference type="ChEBI" id="CHEBI:128769"/>
    </ligand>
</feature>
<feature type="binding site" evidence="1">
    <location>
        <position position="227"/>
    </location>
    <ligand>
        <name>(2E)-4-hydroxy-3-methylbut-2-enyl diphosphate</name>
        <dbReference type="ChEBI" id="CHEBI:128753"/>
    </ligand>
</feature>
<feature type="binding site" evidence="1">
    <location>
        <position position="227"/>
    </location>
    <ligand>
        <name>dimethylallyl diphosphate</name>
        <dbReference type="ChEBI" id="CHEBI:57623"/>
    </ligand>
</feature>
<feature type="binding site" evidence="1">
    <location>
        <position position="227"/>
    </location>
    <ligand>
        <name>isopentenyl diphosphate</name>
        <dbReference type="ChEBI" id="CHEBI:128769"/>
    </ligand>
</feature>
<feature type="binding site" evidence="1">
    <location>
        <position position="269"/>
    </location>
    <ligand>
        <name>(2E)-4-hydroxy-3-methylbut-2-enyl diphosphate</name>
        <dbReference type="ChEBI" id="CHEBI:128753"/>
    </ligand>
</feature>
<feature type="binding site" evidence="1">
    <location>
        <position position="269"/>
    </location>
    <ligand>
        <name>dimethylallyl diphosphate</name>
        <dbReference type="ChEBI" id="CHEBI:57623"/>
    </ligand>
</feature>
<feature type="binding site" evidence="1">
    <location>
        <position position="269"/>
    </location>
    <ligand>
        <name>isopentenyl diphosphate</name>
        <dbReference type="ChEBI" id="CHEBI:128769"/>
    </ligand>
</feature>
<comment type="function">
    <text evidence="1">Catalyzes the conversion of 1-hydroxy-2-methyl-2-(E)-butenyl 4-diphosphate (HMBPP) into a mixture of isopentenyl diphosphate (IPP) and dimethylallyl diphosphate (DMAPP). Acts in the terminal step of the DOXP/MEP pathway for isoprenoid precursor biosynthesis.</text>
</comment>
<comment type="catalytic activity">
    <reaction evidence="1">
        <text>isopentenyl diphosphate + 2 oxidized [2Fe-2S]-[ferredoxin] + H2O = (2E)-4-hydroxy-3-methylbut-2-enyl diphosphate + 2 reduced [2Fe-2S]-[ferredoxin] + 2 H(+)</text>
        <dbReference type="Rhea" id="RHEA:24488"/>
        <dbReference type="Rhea" id="RHEA-COMP:10000"/>
        <dbReference type="Rhea" id="RHEA-COMP:10001"/>
        <dbReference type="ChEBI" id="CHEBI:15377"/>
        <dbReference type="ChEBI" id="CHEBI:15378"/>
        <dbReference type="ChEBI" id="CHEBI:33737"/>
        <dbReference type="ChEBI" id="CHEBI:33738"/>
        <dbReference type="ChEBI" id="CHEBI:128753"/>
        <dbReference type="ChEBI" id="CHEBI:128769"/>
        <dbReference type="EC" id="1.17.7.4"/>
    </reaction>
</comment>
<comment type="catalytic activity">
    <reaction evidence="1">
        <text>dimethylallyl diphosphate + 2 oxidized [2Fe-2S]-[ferredoxin] + H2O = (2E)-4-hydroxy-3-methylbut-2-enyl diphosphate + 2 reduced [2Fe-2S]-[ferredoxin] + 2 H(+)</text>
        <dbReference type="Rhea" id="RHEA:24825"/>
        <dbReference type="Rhea" id="RHEA-COMP:10000"/>
        <dbReference type="Rhea" id="RHEA-COMP:10001"/>
        <dbReference type="ChEBI" id="CHEBI:15377"/>
        <dbReference type="ChEBI" id="CHEBI:15378"/>
        <dbReference type="ChEBI" id="CHEBI:33737"/>
        <dbReference type="ChEBI" id="CHEBI:33738"/>
        <dbReference type="ChEBI" id="CHEBI:57623"/>
        <dbReference type="ChEBI" id="CHEBI:128753"/>
        <dbReference type="EC" id="1.17.7.4"/>
    </reaction>
</comment>
<comment type="cofactor">
    <cofactor evidence="1">
        <name>[4Fe-4S] cluster</name>
        <dbReference type="ChEBI" id="CHEBI:49883"/>
    </cofactor>
    <text evidence="1">Binds 1 [4Fe-4S] cluster per subunit.</text>
</comment>
<comment type="pathway">
    <text evidence="1">Isoprenoid biosynthesis; dimethylallyl diphosphate biosynthesis; dimethylallyl diphosphate from (2E)-4-hydroxy-3-methylbutenyl diphosphate: step 1/1.</text>
</comment>
<comment type="pathway">
    <text evidence="1">Isoprenoid biosynthesis; isopentenyl diphosphate biosynthesis via DXP pathway; isopentenyl diphosphate from 1-deoxy-D-xylulose 5-phosphate: step 6/6.</text>
</comment>
<comment type="similarity">
    <text evidence="1">Belongs to the IspH family.</text>
</comment>
<gene>
    <name evidence="1" type="primary">ispH</name>
    <name type="ordered locus">HAPS_1306</name>
</gene>
<sequence length="314" mass="34228">MNIILANPRGFCAGVDRAISIVELALEIHGAPIYVRHEVVHNRFVVDGLKAKGAIFVEELDEVPDGAIVIFSAHGVSQAVRHEAKRRELKVFDATCPLVTKVHMQVARASKKGTKAILIGHEGHPEVVGTMGQYDNEKGGIFLVEDVEDIAKLGLKEDEDLTFMTQTTLSIDDTIDVIEALKQKYPAIQGPRKNDICYATTNRQQAVRELAKLAQLVLVVGSKNSSNSNRLAELASRMGTPSQLIDGPQDIDPNWLQGVTTIGITAGASAPEVLVQSVVEHLKTLGVTKVEELEGCEENTVFEVPRELRITEVN</sequence>
<accession>B8F6E6</accession>
<evidence type="ECO:0000255" key="1">
    <source>
        <dbReference type="HAMAP-Rule" id="MF_00191"/>
    </source>
</evidence>
<name>ISPH_GLAP5</name>
<protein>
    <recommendedName>
        <fullName evidence="1">4-hydroxy-3-methylbut-2-enyl diphosphate reductase</fullName>
        <shortName evidence="1">HMBPP reductase</shortName>
        <ecNumber evidence="1">1.17.7.4</ecNumber>
    </recommendedName>
</protein>
<reference key="1">
    <citation type="journal article" date="2009" name="J. Bacteriol.">
        <title>Complete genome sequence of Haemophilus parasuis SH0165.</title>
        <authorList>
            <person name="Yue M."/>
            <person name="Yang F."/>
            <person name="Yang J."/>
            <person name="Bei W."/>
            <person name="Cai X."/>
            <person name="Chen L."/>
            <person name="Dong J."/>
            <person name="Zhou R."/>
            <person name="Jin M."/>
            <person name="Jin Q."/>
            <person name="Chen H."/>
        </authorList>
    </citation>
    <scope>NUCLEOTIDE SEQUENCE [LARGE SCALE GENOMIC DNA]</scope>
    <source>
        <strain>SH0165</strain>
    </source>
</reference>